<feature type="chain" id="PRO_0000050613" description="5-hydroxyisourate hydrolase">
    <location>
        <begin position="1"/>
        <end position="126"/>
    </location>
</feature>
<feature type="binding site" evidence="1">
    <location>
        <position position="16"/>
    </location>
    <ligand>
        <name>substrate</name>
    </ligand>
</feature>
<feature type="binding site" evidence="1">
    <location>
        <position position="54"/>
    </location>
    <ligand>
        <name>substrate</name>
    </ligand>
</feature>
<feature type="binding site" evidence="1">
    <location>
        <position position="123"/>
    </location>
    <ligand>
        <name>substrate</name>
    </ligand>
</feature>
<keyword id="KW-0378">Hydrolase</keyword>
<keyword id="KW-0659">Purine metabolism</keyword>
<keyword id="KW-1185">Reference proteome</keyword>
<name>HIUH_PSEAE</name>
<proteinExistence type="inferred from homology"/>
<comment type="function">
    <text evidence="1">Catalyzes the hydrolysis of 5-hydroxyisourate (HIU) to 2-oxo-4-hydroxy-4-carboxy-5-ureidoimidazoline (OHCU).</text>
</comment>
<comment type="catalytic activity">
    <reaction>
        <text>5-hydroxyisourate + H2O = 5-hydroxy-2-oxo-4-ureido-2,5-dihydro-1H-imidazole-5-carboxylate + H(+)</text>
        <dbReference type="Rhea" id="RHEA:23736"/>
        <dbReference type="ChEBI" id="CHEBI:15377"/>
        <dbReference type="ChEBI" id="CHEBI:15378"/>
        <dbReference type="ChEBI" id="CHEBI:18072"/>
        <dbReference type="ChEBI" id="CHEBI:58639"/>
        <dbReference type="EC" id="3.5.2.17"/>
    </reaction>
</comment>
<comment type="subunit">
    <text evidence="1">Homotetramer.</text>
</comment>
<comment type="miscellaneous">
    <text>HIU hydrolysis also occurs spontaneously, but more slowly.</text>
</comment>
<comment type="similarity">
    <text evidence="2">Belongs to the transthyretin family. 5-hydroxyisourate hydrolase subfamily.</text>
</comment>
<dbReference type="EC" id="3.5.2.17"/>
<dbReference type="EMBL" id="AE004091">
    <property type="protein sequence ID" value="AAG04907.1"/>
    <property type="molecule type" value="Genomic_DNA"/>
</dbReference>
<dbReference type="PIR" id="A83456">
    <property type="entry name" value="A83456"/>
</dbReference>
<dbReference type="RefSeq" id="NP_250209.1">
    <property type="nucleotide sequence ID" value="NC_002516.2"/>
</dbReference>
<dbReference type="SMR" id="Q9I3J5"/>
<dbReference type="FunCoup" id="Q9I3J5">
    <property type="interactions" value="171"/>
</dbReference>
<dbReference type="STRING" id="208964.PA1518"/>
<dbReference type="PaxDb" id="208964-PA1518"/>
<dbReference type="DNASU" id="879293"/>
<dbReference type="GeneID" id="879293"/>
<dbReference type="KEGG" id="pae:PA1518"/>
<dbReference type="PATRIC" id="fig|208964.12.peg.1570"/>
<dbReference type="PseudoCAP" id="PA1518"/>
<dbReference type="HOGENOM" id="CLU_115536_1_1_6"/>
<dbReference type="InParanoid" id="Q9I3J5"/>
<dbReference type="OrthoDB" id="9792386at2"/>
<dbReference type="PhylomeDB" id="Q9I3J5"/>
<dbReference type="BioCyc" id="PAER208964:G1FZ6-1545-MONOMER"/>
<dbReference type="Proteomes" id="UP000002438">
    <property type="component" value="Chromosome"/>
</dbReference>
<dbReference type="GO" id="GO:0033971">
    <property type="term" value="F:hydroxyisourate hydrolase activity"/>
    <property type="evidence" value="ECO:0007669"/>
    <property type="project" value="UniProtKB-EC"/>
</dbReference>
<dbReference type="GO" id="GO:0006144">
    <property type="term" value="P:purine nucleobase metabolic process"/>
    <property type="evidence" value="ECO:0000318"/>
    <property type="project" value="GO_Central"/>
</dbReference>
<dbReference type="CDD" id="cd05822">
    <property type="entry name" value="TLP_HIUase"/>
    <property type="match status" value="1"/>
</dbReference>
<dbReference type="FunFam" id="2.60.40.180:FF:000005">
    <property type="entry name" value="5-hydroxyisourate hydrolase"/>
    <property type="match status" value="1"/>
</dbReference>
<dbReference type="Gene3D" id="2.60.40.180">
    <property type="entry name" value="Transthyretin/hydroxyisourate hydrolase domain"/>
    <property type="match status" value="1"/>
</dbReference>
<dbReference type="InterPro" id="IPR014306">
    <property type="entry name" value="Hydroxyisourate_hydrolase"/>
</dbReference>
<dbReference type="InterPro" id="IPR023418">
    <property type="entry name" value="Thyroxine_BS"/>
</dbReference>
<dbReference type="InterPro" id="IPR000895">
    <property type="entry name" value="Transthyretin/HIU_hydrolase"/>
</dbReference>
<dbReference type="InterPro" id="IPR023416">
    <property type="entry name" value="Transthyretin/HIU_hydrolase_d"/>
</dbReference>
<dbReference type="InterPro" id="IPR036817">
    <property type="entry name" value="Transthyretin/HIU_hydrolase_sf"/>
</dbReference>
<dbReference type="InterPro" id="IPR023419">
    <property type="entry name" value="Transthyretin_CS"/>
</dbReference>
<dbReference type="NCBIfam" id="TIGR02962">
    <property type="entry name" value="hdxy_isourate"/>
    <property type="match status" value="1"/>
</dbReference>
<dbReference type="PANTHER" id="PTHR10395:SF7">
    <property type="entry name" value="5-HYDROXYISOURATE HYDROLASE"/>
    <property type="match status" value="1"/>
</dbReference>
<dbReference type="PANTHER" id="PTHR10395">
    <property type="entry name" value="URICASE AND TRANSTHYRETIN-RELATED"/>
    <property type="match status" value="1"/>
</dbReference>
<dbReference type="Pfam" id="PF00576">
    <property type="entry name" value="Transthyretin"/>
    <property type="match status" value="1"/>
</dbReference>
<dbReference type="PRINTS" id="PR00189">
    <property type="entry name" value="TRNSTHYRETIN"/>
</dbReference>
<dbReference type="SUPFAM" id="SSF49472">
    <property type="entry name" value="Transthyretin (synonym: prealbumin)"/>
    <property type="match status" value="1"/>
</dbReference>
<dbReference type="PROSITE" id="PS00768">
    <property type="entry name" value="TRANSTHYRETIN_1"/>
    <property type="match status" value="1"/>
</dbReference>
<dbReference type="PROSITE" id="PS00769">
    <property type="entry name" value="TRANSTHYRETIN_2"/>
    <property type="match status" value="1"/>
</dbReference>
<evidence type="ECO:0000250" key="1"/>
<evidence type="ECO:0000305" key="2"/>
<accession>Q9I3J5</accession>
<organism>
    <name type="scientific">Pseudomonas aeruginosa (strain ATCC 15692 / DSM 22644 / CIP 104116 / JCM 14847 / LMG 12228 / 1C / PRS 101 / PAO1)</name>
    <dbReference type="NCBI Taxonomy" id="208964"/>
    <lineage>
        <taxon>Bacteria</taxon>
        <taxon>Pseudomonadati</taxon>
        <taxon>Pseudomonadota</taxon>
        <taxon>Gammaproteobacteria</taxon>
        <taxon>Pseudomonadales</taxon>
        <taxon>Pseudomonadaceae</taxon>
        <taxon>Pseudomonas</taxon>
    </lineage>
</organism>
<sequence>MSASGRPQPMGRLTTHVLDSAHGCPGHGIKIELYRVEGQQLELIATTLTNHDGRCDQPVLQGEDFRPGVYQLVFNAGDYYRARGVQLPEPAFLDQVVLRFGIASADDHYHVPLLISPYSYSTYRGS</sequence>
<reference key="1">
    <citation type="journal article" date="2000" name="Nature">
        <title>Complete genome sequence of Pseudomonas aeruginosa PAO1, an opportunistic pathogen.</title>
        <authorList>
            <person name="Stover C.K."/>
            <person name="Pham X.-Q.T."/>
            <person name="Erwin A.L."/>
            <person name="Mizoguchi S.D."/>
            <person name="Warrener P."/>
            <person name="Hickey M.J."/>
            <person name="Brinkman F.S.L."/>
            <person name="Hufnagle W.O."/>
            <person name="Kowalik D.J."/>
            <person name="Lagrou M."/>
            <person name="Garber R.L."/>
            <person name="Goltry L."/>
            <person name="Tolentino E."/>
            <person name="Westbrock-Wadman S."/>
            <person name="Yuan Y."/>
            <person name="Brody L.L."/>
            <person name="Coulter S.N."/>
            <person name="Folger K.R."/>
            <person name="Kas A."/>
            <person name="Larbig K."/>
            <person name="Lim R.M."/>
            <person name="Smith K.A."/>
            <person name="Spencer D.H."/>
            <person name="Wong G.K.-S."/>
            <person name="Wu Z."/>
            <person name="Paulsen I.T."/>
            <person name="Reizer J."/>
            <person name="Saier M.H. Jr."/>
            <person name="Hancock R.E.W."/>
            <person name="Lory S."/>
            <person name="Olson M.V."/>
        </authorList>
    </citation>
    <scope>NUCLEOTIDE SEQUENCE [LARGE SCALE GENOMIC DNA]</scope>
    <source>
        <strain>ATCC 15692 / DSM 22644 / CIP 104116 / JCM 14847 / LMG 12228 / 1C / PRS 101 / PAO1</strain>
    </source>
</reference>
<protein>
    <recommendedName>
        <fullName>5-hydroxyisourate hydrolase</fullName>
        <shortName>HIU hydrolase</shortName>
        <shortName>HIUHase</shortName>
        <ecNumber>3.5.2.17</ecNumber>
    </recommendedName>
</protein>
<gene>
    <name type="ordered locus">PA1518</name>
</gene>